<name>TATB_HERAR</name>
<proteinExistence type="inferred from homology"/>
<reference key="1">
    <citation type="journal article" date="2007" name="PLoS Genet.">
        <title>A tale of two oxidation states: bacterial colonization of arsenic-rich environments.</title>
        <authorList>
            <person name="Muller D."/>
            <person name="Medigue C."/>
            <person name="Koechler S."/>
            <person name="Barbe V."/>
            <person name="Barakat M."/>
            <person name="Talla E."/>
            <person name="Bonnefoy V."/>
            <person name="Krin E."/>
            <person name="Arsene-Ploetze F."/>
            <person name="Carapito C."/>
            <person name="Chandler M."/>
            <person name="Cournoyer B."/>
            <person name="Cruveiller S."/>
            <person name="Dossat C."/>
            <person name="Duval S."/>
            <person name="Heymann M."/>
            <person name="Leize E."/>
            <person name="Lieutaud A."/>
            <person name="Lievremont D."/>
            <person name="Makita Y."/>
            <person name="Mangenot S."/>
            <person name="Nitschke W."/>
            <person name="Ortet P."/>
            <person name="Perdrial N."/>
            <person name="Schoepp B."/>
            <person name="Siguier P."/>
            <person name="Simeonova D.D."/>
            <person name="Rouy Z."/>
            <person name="Segurens B."/>
            <person name="Turlin E."/>
            <person name="Vallenet D."/>
            <person name="van Dorsselaer A."/>
            <person name="Weiss S."/>
            <person name="Weissenbach J."/>
            <person name="Lett M.-C."/>
            <person name="Danchin A."/>
            <person name="Bertin P.N."/>
        </authorList>
    </citation>
    <scope>NUCLEOTIDE SEQUENCE [LARGE SCALE GENOMIC DNA]</scope>
    <source>
        <strain>ULPAs1</strain>
    </source>
</reference>
<feature type="chain" id="PRO_0000301178" description="Sec-independent protein translocase protein TatB">
    <location>
        <begin position="1"/>
        <end position="166"/>
    </location>
</feature>
<feature type="transmembrane region" description="Helical" evidence="1">
    <location>
        <begin position="1"/>
        <end position="21"/>
    </location>
</feature>
<feature type="region of interest" description="Disordered" evidence="2">
    <location>
        <begin position="85"/>
        <end position="146"/>
    </location>
</feature>
<protein>
    <recommendedName>
        <fullName evidence="1">Sec-independent protein translocase protein TatB</fullName>
    </recommendedName>
</protein>
<dbReference type="EMBL" id="CU207211">
    <property type="protein sequence ID" value="CAL63168.1"/>
    <property type="molecule type" value="Genomic_DNA"/>
</dbReference>
<dbReference type="SMR" id="A4G9I1"/>
<dbReference type="STRING" id="204773.HEAR3059"/>
<dbReference type="KEGG" id="har:HEAR3059"/>
<dbReference type="eggNOG" id="COG1826">
    <property type="taxonomic scope" value="Bacteria"/>
</dbReference>
<dbReference type="HOGENOM" id="CLU_086034_1_1_4"/>
<dbReference type="OrthoDB" id="9816005at2"/>
<dbReference type="Proteomes" id="UP000006697">
    <property type="component" value="Chromosome"/>
</dbReference>
<dbReference type="GO" id="GO:0033281">
    <property type="term" value="C:TAT protein transport complex"/>
    <property type="evidence" value="ECO:0007669"/>
    <property type="project" value="UniProtKB-UniRule"/>
</dbReference>
<dbReference type="GO" id="GO:0008320">
    <property type="term" value="F:protein transmembrane transporter activity"/>
    <property type="evidence" value="ECO:0007669"/>
    <property type="project" value="UniProtKB-UniRule"/>
</dbReference>
<dbReference type="GO" id="GO:0043953">
    <property type="term" value="P:protein transport by the Tat complex"/>
    <property type="evidence" value="ECO:0007669"/>
    <property type="project" value="UniProtKB-UniRule"/>
</dbReference>
<dbReference type="Gene3D" id="1.20.5.3310">
    <property type="match status" value="1"/>
</dbReference>
<dbReference type="HAMAP" id="MF_00237">
    <property type="entry name" value="TatB"/>
    <property type="match status" value="1"/>
</dbReference>
<dbReference type="InterPro" id="IPR003369">
    <property type="entry name" value="TatA/B/E"/>
</dbReference>
<dbReference type="InterPro" id="IPR018448">
    <property type="entry name" value="TatB"/>
</dbReference>
<dbReference type="NCBIfam" id="TIGR01410">
    <property type="entry name" value="tatB"/>
    <property type="match status" value="1"/>
</dbReference>
<dbReference type="PANTHER" id="PTHR33162">
    <property type="entry name" value="SEC-INDEPENDENT PROTEIN TRANSLOCASE PROTEIN TATA, CHLOROPLASTIC"/>
    <property type="match status" value="1"/>
</dbReference>
<dbReference type="PANTHER" id="PTHR33162:SF1">
    <property type="entry name" value="SEC-INDEPENDENT PROTEIN TRANSLOCASE PROTEIN TATA, CHLOROPLASTIC"/>
    <property type="match status" value="1"/>
</dbReference>
<dbReference type="Pfam" id="PF02416">
    <property type="entry name" value="TatA_B_E"/>
    <property type="match status" value="1"/>
</dbReference>
<dbReference type="PRINTS" id="PR01506">
    <property type="entry name" value="TATBPROTEIN"/>
</dbReference>
<sequence length="166" mass="18371">MIDIAFSKLAIIGVAALVFIGPEKLPTVARMAGTLFGRAQRYINDVKSEVSREMELDELRKMHKDVQDAATDVERSIAQNISAADSSLHSAWDESDTDTNPLMEPPTLDQSSDKSKNFRKKKLAATSAVPSWYKRQSGQKSRVISGAARMAKFRPASARKSTPFFH</sequence>
<keyword id="KW-0997">Cell inner membrane</keyword>
<keyword id="KW-1003">Cell membrane</keyword>
<keyword id="KW-0472">Membrane</keyword>
<keyword id="KW-0653">Protein transport</keyword>
<keyword id="KW-1185">Reference proteome</keyword>
<keyword id="KW-0811">Translocation</keyword>
<keyword id="KW-0812">Transmembrane</keyword>
<keyword id="KW-1133">Transmembrane helix</keyword>
<keyword id="KW-0813">Transport</keyword>
<evidence type="ECO:0000255" key="1">
    <source>
        <dbReference type="HAMAP-Rule" id="MF_00237"/>
    </source>
</evidence>
<evidence type="ECO:0000256" key="2">
    <source>
        <dbReference type="SAM" id="MobiDB-lite"/>
    </source>
</evidence>
<gene>
    <name evidence="1" type="primary">tatB</name>
    <name type="ordered locus">HEAR3059</name>
</gene>
<organism>
    <name type="scientific">Herminiimonas arsenicoxydans</name>
    <dbReference type="NCBI Taxonomy" id="204773"/>
    <lineage>
        <taxon>Bacteria</taxon>
        <taxon>Pseudomonadati</taxon>
        <taxon>Pseudomonadota</taxon>
        <taxon>Betaproteobacteria</taxon>
        <taxon>Burkholderiales</taxon>
        <taxon>Oxalobacteraceae</taxon>
        <taxon>Herminiimonas</taxon>
    </lineage>
</organism>
<comment type="function">
    <text evidence="1">Part of the twin-arginine translocation (Tat) system that transports large folded proteins containing a characteristic twin-arginine motif in their signal peptide across membranes. Together with TatC, TatB is part of a receptor directly interacting with Tat signal peptides. TatB may form an oligomeric binding site that transiently accommodates folded Tat precursor proteins before their translocation.</text>
</comment>
<comment type="subunit">
    <text evidence="1">The Tat system comprises two distinct complexes: a TatABC complex, containing multiple copies of TatA, TatB and TatC subunits, and a separate TatA complex, containing only TatA subunits. Substrates initially bind to the TatABC complex, which probably triggers association of the separate TatA complex to form the active translocon.</text>
</comment>
<comment type="subcellular location">
    <subcellularLocation>
        <location evidence="1">Cell inner membrane</location>
        <topology evidence="1">Single-pass membrane protein</topology>
    </subcellularLocation>
</comment>
<comment type="similarity">
    <text evidence="1">Belongs to the TatB family.</text>
</comment>
<accession>A4G9I1</accession>